<reference key="1">
    <citation type="journal article" date="2002" name="Proc. Natl. Acad. Sci. U.S.A.">
        <title>The Brucella suis genome reveals fundamental similarities between animal and plant pathogens and symbionts.</title>
        <authorList>
            <person name="Paulsen I.T."/>
            <person name="Seshadri R."/>
            <person name="Nelson K.E."/>
            <person name="Eisen J.A."/>
            <person name="Heidelberg J.F."/>
            <person name="Read T.D."/>
            <person name="Dodson R.J."/>
            <person name="Umayam L.A."/>
            <person name="Brinkac L.M."/>
            <person name="Beanan M.J."/>
            <person name="Daugherty S.C."/>
            <person name="DeBoy R.T."/>
            <person name="Durkin A.S."/>
            <person name="Kolonay J.F."/>
            <person name="Madupu R."/>
            <person name="Nelson W.C."/>
            <person name="Ayodeji B."/>
            <person name="Kraul M."/>
            <person name="Shetty J."/>
            <person name="Malek J.A."/>
            <person name="Van Aken S.E."/>
            <person name="Riedmuller S."/>
            <person name="Tettelin H."/>
            <person name="Gill S.R."/>
            <person name="White O."/>
            <person name="Salzberg S.L."/>
            <person name="Hoover D.L."/>
            <person name="Lindler L.E."/>
            <person name="Halling S.M."/>
            <person name="Boyle S.M."/>
            <person name="Fraser C.M."/>
        </authorList>
    </citation>
    <scope>NUCLEOTIDE SEQUENCE [LARGE SCALE GENOMIC DNA]</scope>
    <source>
        <strain>1330</strain>
    </source>
</reference>
<reference key="2">
    <citation type="journal article" date="2011" name="J. Bacteriol.">
        <title>Revised genome sequence of Brucella suis 1330.</title>
        <authorList>
            <person name="Tae H."/>
            <person name="Shallom S."/>
            <person name="Settlage R."/>
            <person name="Preston D."/>
            <person name="Adams L.G."/>
            <person name="Garner H.R."/>
        </authorList>
    </citation>
    <scope>NUCLEOTIDE SEQUENCE [LARGE SCALE GENOMIC DNA]</scope>
    <source>
        <strain>1330</strain>
    </source>
</reference>
<evidence type="ECO:0000255" key="1">
    <source>
        <dbReference type="HAMAP-Rule" id="MF_00140"/>
    </source>
</evidence>
<evidence type="ECO:0000305" key="2"/>
<organism>
    <name type="scientific">Brucella suis biovar 1 (strain 1330)</name>
    <dbReference type="NCBI Taxonomy" id="204722"/>
    <lineage>
        <taxon>Bacteria</taxon>
        <taxon>Pseudomonadati</taxon>
        <taxon>Pseudomonadota</taxon>
        <taxon>Alphaproteobacteria</taxon>
        <taxon>Hyphomicrobiales</taxon>
        <taxon>Brucellaceae</taxon>
        <taxon>Brucella/Ochrobactrum group</taxon>
        <taxon>Brucella</taxon>
    </lineage>
</organism>
<protein>
    <recommendedName>
        <fullName evidence="1">Tryptophan--tRNA ligase</fullName>
        <ecNumber evidence="1">6.1.1.2</ecNumber>
    </recommendedName>
    <alternativeName>
        <fullName evidence="1">Tryptophanyl-tRNA synthetase</fullName>
        <shortName evidence="1">TrpRS</shortName>
    </alternativeName>
</protein>
<feature type="chain" id="PRO_0000136609" description="Tryptophan--tRNA ligase">
    <location>
        <begin position="1"/>
        <end position="355"/>
    </location>
</feature>
<feature type="short sequence motif" description="'HIGH' region" evidence="1">
    <location>
        <begin position="14"/>
        <end position="22"/>
    </location>
</feature>
<feature type="short sequence motif" description="'KMSKS' region" evidence="1">
    <location>
        <begin position="217"/>
        <end position="221"/>
    </location>
</feature>
<feature type="binding site" evidence="1">
    <location>
        <begin position="13"/>
        <end position="15"/>
    </location>
    <ligand>
        <name>ATP</name>
        <dbReference type="ChEBI" id="CHEBI:30616"/>
    </ligand>
</feature>
<feature type="binding site" evidence="1">
    <location>
        <begin position="21"/>
        <end position="22"/>
    </location>
    <ligand>
        <name>ATP</name>
        <dbReference type="ChEBI" id="CHEBI:30616"/>
    </ligand>
</feature>
<feature type="binding site" evidence="1">
    <location>
        <position position="137"/>
    </location>
    <ligand>
        <name>L-tryptophan</name>
        <dbReference type="ChEBI" id="CHEBI:57912"/>
    </ligand>
</feature>
<feature type="binding site" evidence="1">
    <location>
        <begin position="149"/>
        <end position="151"/>
    </location>
    <ligand>
        <name>ATP</name>
        <dbReference type="ChEBI" id="CHEBI:30616"/>
    </ligand>
</feature>
<feature type="binding site" evidence="1">
    <location>
        <position position="208"/>
    </location>
    <ligand>
        <name>ATP</name>
        <dbReference type="ChEBI" id="CHEBI:30616"/>
    </ligand>
</feature>
<feature type="binding site" evidence="1">
    <location>
        <begin position="217"/>
        <end position="221"/>
    </location>
    <ligand>
        <name>ATP</name>
        <dbReference type="ChEBI" id="CHEBI:30616"/>
    </ligand>
</feature>
<gene>
    <name evidence="1" type="primary">trpS</name>
    <name type="ordered locus">BR0142</name>
    <name type="ordered locus">BS1330_I0142</name>
</gene>
<accession>P67587</accession>
<accession>G0KBB6</accession>
<accession>Q8G314</accession>
<accession>Q8YES1</accession>
<name>SYW_BRUSU</name>
<keyword id="KW-0030">Aminoacyl-tRNA synthetase</keyword>
<keyword id="KW-0067">ATP-binding</keyword>
<keyword id="KW-0963">Cytoplasm</keyword>
<keyword id="KW-0436">Ligase</keyword>
<keyword id="KW-0547">Nucleotide-binding</keyword>
<keyword id="KW-0648">Protein biosynthesis</keyword>
<sequence length="355" mass="39130">MSTFKPLVFSGVQPTGNLHLGNYLGAIKRWVEVQKTEECIYCVVDMHALTVSPDPVELMQSTREVTAAFLAAGIDPKKSIVFNQSRVMQHAELAWVFNCVARIGWMSRMTQFKDKAGKDRENASLGLFAYPSLMAADILLYRATAVPVGEDQKQHLELTRDIAQKFNNDYSDRIASLGVGVDMKVGDEQVSGFFPLTEPMISGPAMRIMSLRDGTKKMSKSDPSDLSRINLIDDEDTITKKIRKAKTDSDGLPSEVDGLEGRPEADNLVGIYAALSSTTKEDVLKEFGGRQFSDLKASLADLAVARLSPITHEMRRLVADPAHIDSVLRDGGEQAGAIAEQTMRHVRDIVGWLQN</sequence>
<comment type="function">
    <text evidence="1">Catalyzes the attachment of tryptophan to tRNA(Trp).</text>
</comment>
<comment type="catalytic activity">
    <reaction evidence="1">
        <text>tRNA(Trp) + L-tryptophan + ATP = L-tryptophyl-tRNA(Trp) + AMP + diphosphate + H(+)</text>
        <dbReference type="Rhea" id="RHEA:24080"/>
        <dbReference type="Rhea" id="RHEA-COMP:9671"/>
        <dbReference type="Rhea" id="RHEA-COMP:9705"/>
        <dbReference type="ChEBI" id="CHEBI:15378"/>
        <dbReference type="ChEBI" id="CHEBI:30616"/>
        <dbReference type="ChEBI" id="CHEBI:33019"/>
        <dbReference type="ChEBI" id="CHEBI:57912"/>
        <dbReference type="ChEBI" id="CHEBI:78442"/>
        <dbReference type="ChEBI" id="CHEBI:78535"/>
        <dbReference type="ChEBI" id="CHEBI:456215"/>
        <dbReference type="EC" id="6.1.1.2"/>
    </reaction>
</comment>
<comment type="subunit">
    <text evidence="1">Homodimer.</text>
</comment>
<comment type="subcellular location">
    <subcellularLocation>
        <location evidence="1">Cytoplasm</location>
    </subcellularLocation>
</comment>
<comment type="similarity">
    <text evidence="1">Belongs to the class-I aminoacyl-tRNA synthetase family.</text>
</comment>
<comment type="sequence caution" evidence="2">
    <conflict type="erroneous initiation">
        <sequence resource="EMBL-CDS" id="AAN29096"/>
    </conflict>
</comment>
<dbReference type="EC" id="6.1.1.2" evidence="1"/>
<dbReference type="EMBL" id="AE014291">
    <property type="protein sequence ID" value="AAN29096.1"/>
    <property type="status" value="ALT_INIT"/>
    <property type="molecule type" value="Genomic_DNA"/>
</dbReference>
<dbReference type="EMBL" id="CP002997">
    <property type="protein sequence ID" value="AEM17508.1"/>
    <property type="molecule type" value="Genomic_DNA"/>
</dbReference>
<dbReference type="RefSeq" id="WP_004684672.1">
    <property type="nucleotide sequence ID" value="NZ_KN046804.1"/>
</dbReference>
<dbReference type="SMR" id="P67587"/>
<dbReference type="GeneID" id="97534444"/>
<dbReference type="KEGG" id="bms:BR0142"/>
<dbReference type="KEGG" id="bsi:BS1330_I0142"/>
<dbReference type="PATRIC" id="fig|204722.21.peg.3316"/>
<dbReference type="HOGENOM" id="CLU_029244_1_4_5"/>
<dbReference type="Proteomes" id="UP000007104">
    <property type="component" value="Chromosome I"/>
</dbReference>
<dbReference type="GO" id="GO:0005829">
    <property type="term" value="C:cytosol"/>
    <property type="evidence" value="ECO:0007669"/>
    <property type="project" value="TreeGrafter"/>
</dbReference>
<dbReference type="GO" id="GO:0005524">
    <property type="term" value="F:ATP binding"/>
    <property type="evidence" value="ECO:0007669"/>
    <property type="project" value="UniProtKB-UniRule"/>
</dbReference>
<dbReference type="GO" id="GO:0004830">
    <property type="term" value="F:tryptophan-tRNA ligase activity"/>
    <property type="evidence" value="ECO:0007669"/>
    <property type="project" value="UniProtKB-UniRule"/>
</dbReference>
<dbReference type="GO" id="GO:0006436">
    <property type="term" value="P:tryptophanyl-tRNA aminoacylation"/>
    <property type="evidence" value="ECO:0007669"/>
    <property type="project" value="UniProtKB-UniRule"/>
</dbReference>
<dbReference type="CDD" id="cd00806">
    <property type="entry name" value="TrpRS_core"/>
    <property type="match status" value="1"/>
</dbReference>
<dbReference type="FunFam" id="1.10.240.10:FF:000002">
    <property type="entry name" value="Tryptophan--tRNA ligase"/>
    <property type="match status" value="1"/>
</dbReference>
<dbReference type="Gene3D" id="3.40.50.620">
    <property type="entry name" value="HUPs"/>
    <property type="match status" value="1"/>
</dbReference>
<dbReference type="Gene3D" id="1.10.240.10">
    <property type="entry name" value="Tyrosyl-Transfer RNA Synthetase"/>
    <property type="match status" value="1"/>
</dbReference>
<dbReference type="HAMAP" id="MF_00140_B">
    <property type="entry name" value="Trp_tRNA_synth_B"/>
    <property type="match status" value="1"/>
</dbReference>
<dbReference type="InterPro" id="IPR001412">
    <property type="entry name" value="aa-tRNA-synth_I_CS"/>
</dbReference>
<dbReference type="InterPro" id="IPR002305">
    <property type="entry name" value="aa-tRNA-synth_Ic"/>
</dbReference>
<dbReference type="InterPro" id="IPR014729">
    <property type="entry name" value="Rossmann-like_a/b/a_fold"/>
</dbReference>
<dbReference type="InterPro" id="IPR002306">
    <property type="entry name" value="Trp-tRNA-ligase"/>
</dbReference>
<dbReference type="InterPro" id="IPR024109">
    <property type="entry name" value="Trp-tRNA-ligase_bac-type"/>
</dbReference>
<dbReference type="InterPro" id="IPR050203">
    <property type="entry name" value="Trp-tRNA_synthetase"/>
</dbReference>
<dbReference type="NCBIfam" id="TIGR00233">
    <property type="entry name" value="trpS"/>
    <property type="match status" value="1"/>
</dbReference>
<dbReference type="PANTHER" id="PTHR43766">
    <property type="entry name" value="TRYPTOPHAN--TRNA LIGASE, MITOCHONDRIAL"/>
    <property type="match status" value="1"/>
</dbReference>
<dbReference type="PANTHER" id="PTHR43766:SF1">
    <property type="entry name" value="TRYPTOPHAN--TRNA LIGASE, MITOCHONDRIAL"/>
    <property type="match status" value="1"/>
</dbReference>
<dbReference type="Pfam" id="PF00579">
    <property type="entry name" value="tRNA-synt_1b"/>
    <property type="match status" value="1"/>
</dbReference>
<dbReference type="PRINTS" id="PR01039">
    <property type="entry name" value="TRNASYNTHTRP"/>
</dbReference>
<dbReference type="SUPFAM" id="SSF52374">
    <property type="entry name" value="Nucleotidylyl transferase"/>
    <property type="match status" value="1"/>
</dbReference>
<dbReference type="PROSITE" id="PS00178">
    <property type="entry name" value="AA_TRNA_LIGASE_I"/>
    <property type="match status" value="1"/>
</dbReference>
<proteinExistence type="inferred from homology"/>